<feature type="chain" id="PRO_0000067744" description="DNA-directed RNA polymerase subunit beta'">
    <location>
        <begin position="1"/>
        <end position="1217"/>
    </location>
</feature>
<feature type="binding site" evidence="1">
    <location>
        <position position="60"/>
    </location>
    <ligand>
        <name>Zn(2+)</name>
        <dbReference type="ChEBI" id="CHEBI:29105"/>
        <label>1</label>
    </ligand>
</feature>
<feature type="binding site" evidence="1">
    <location>
        <position position="62"/>
    </location>
    <ligand>
        <name>Zn(2+)</name>
        <dbReference type="ChEBI" id="CHEBI:29105"/>
        <label>1</label>
    </ligand>
</feature>
<feature type="binding site" evidence="1">
    <location>
        <position position="75"/>
    </location>
    <ligand>
        <name>Zn(2+)</name>
        <dbReference type="ChEBI" id="CHEBI:29105"/>
        <label>1</label>
    </ligand>
</feature>
<feature type="binding site" evidence="1">
    <location>
        <position position="78"/>
    </location>
    <ligand>
        <name>Zn(2+)</name>
        <dbReference type="ChEBI" id="CHEBI:29105"/>
        <label>1</label>
    </ligand>
</feature>
<feature type="binding site" evidence="1">
    <location>
        <position position="449"/>
    </location>
    <ligand>
        <name>Mg(2+)</name>
        <dbReference type="ChEBI" id="CHEBI:18420"/>
    </ligand>
</feature>
<feature type="binding site" evidence="1">
    <location>
        <position position="451"/>
    </location>
    <ligand>
        <name>Mg(2+)</name>
        <dbReference type="ChEBI" id="CHEBI:18420"/>
    </ligand>
</feature>
<feature type="binding site" evidence="1">
    <location>
        <position position="453"/>
    </location>
    <ligand>
        <name>Mg(2+)</name>
        <dbReference type="ChEBI" id="CHEBI:18420"/>
    </ligand>
</feature>
<feature type="binding site" evidence="1">
    <location>
        <position position="818"/>
    </location>
    <ligand>
        <name>Zn(2+)</name>
        <dbReference type="ChEBI" id="CHEBI:29105"/>
        <label>2</label>
    </ligand>
</feature>
<feature type="binding site" evidence="1">
    <location>
        <position position="892"/>
    </location>
    <ligand>
        <name>Zn(2+)</name>
        <dbReference type="ChEBI" id="CHEBI:29105"/>
        <label>2</label>
    </ligand>
</feature>
<feature type="binding site" evidence="1">
    <location>
        <position position="899"/>
    </location>
    <ligand>
        <name>Zn(2+)</name>
        <dbReference type="ChEBI" id="CHEBI:29105"/>
        <label>2</label>
    </ligand>
</feature>
<feature type="binding site" evidence="1">
    <location>
        <position position="902"/>
    </location>
    <ligand>
        <name>Zn(2+)</name>
        <dbReference type="ChEBI" id="CHEBI:29105"/>
        <label>2</label>
    </ligand>
</feature>
<gene>
    <name evidence="1" type="primary">rpoC</name>
    <name type="ordered locus">EF_3237</name>
</gene>
<sequence>MIDVNKFESMQIGLASPEKIRSWSYGEVKKPETINYRTLKPEREGLFCERIFGPTKDWECACGKYKRIRYKGIVCDRCGVEVTRSKVRRERMGHIELAAPVSHIWYFKGIPSRMGLVLDMSPRALEEVIYFASYVVIEPGDTTLEKKQLLTEREYREKREQYGQAFKAAMGAEAVKQLLDNVDLDGEVAQLKEELKTASGQKRTRAIRRLDILEAFRASGNQPSWMVMDVIPVIPPDLRPMVQLEGGRFATSDLNDLYRRVINRNNRLKRLLDLNAPSIIVQNEKRMLQEAVDALIDNGRRGRPVTGPGNRPLKSLSHMLKGKQGRFRQNLLGKRVDYSGRSVIVVGPFLKMYQCGLPKEMAIELFKPFVMRELVQREIATNIKNAKRKIERGEDEVWDILEEVIQEHPVLLNRAPTLHRLGIQAFEPVLVEGRAIRLHPLVCEAYNADFDGDQMAVHVPLNEEAQAEARMLMLAAQNILNPKDGKPVVTPSQDMVLGNYYLTMEEEGREGEGMIFRDMNEAVLAWQNGYVHLHSRIGVQTTLLGDKPFTDWQKERILITTVGKIIFNEIMPVEFPYLNEPTDYNLTVQTPDKYFVEAGTDIPAHIKEQELVLPFKKKNLGNIIAEVFKRFHITETSKMLDRMKDLGYKHSTYAGMTVGIADIMVLHEKQAIIDAAHKQVETITKQFRRGLITDDERYERVIGVWNGAKDEIQQKLIESMEARNPIFMMSDSGARGNISNFTQLAGMRGLMAAPNGRIMELPIISNFREGLSVLEMFISTHGARKGMTDTALKTADSGYLTRRLVDVAQDVIIREDDCGTDRGLEIEAIREGNEIIEPLDERLLGRYTRKSVVHPETGAIIIGADQLITEDLAREIVDAGIEKVTIRSVFTCNTKHGVCKHCYGRNLATGSDVEVGEAVGTIAAQSIGEPGTQLTMRTFHTGGVAGDDITQGLPRIQEIFEARNPKGQAVITEVTGEVIDISEDPATRQKEVTIKGKTDTRTYTVPYTARMKVAEGDIIHRGAPLTEGSIDPKQLLQVRDVLSVENYLLREVQRVYRMQGVEIGDKHIEVMVRQMLRKIRVMDPGDTEILPGTLMDIAEFKDRNYDTLVAGGVPATSRPVLLGITKASLETNSFLSAASFQETTRVLTDAAIRGKKDPLLGLKENVIIGKIIPAGTGMARYRNMEPKEVGVASENVYSISDIEAQMAAEDAMKNINK</sequence>
<proteinExistence type="inferred from homology"/>
<organism>
    <name type="scientific">Enterococcus faecalis (strain ATCC 700802 / V583)</name>
    <dbReference type="NCBI Taxonomy" id="226185"/>
    <lineage>
        <taxon>Bacteria</taxon>
        <taxon>Bacillati</taxon>
        <taxon>Bacillota</taxon>
        <taxon>Bacilli</taxon>
        <taxon>Lactobacillales</taxon>
        <taxon>Enterococcaceae</taxon>
        <taxon>Enterococcus</taxon>
    </lineage>
</organism>
<accession>Q82Z41</accession>
<protein>
    <recommendedName>
        <fullName evidence="1">DNA-directed RNA polymerase subunit beta'</fullName>
        <shortName evidence="1">RNAP subunit beta'</shortName>
        <ecNumber evidence="1">2.7.7.6</ecNumber>
    </recommendedName>
    <alternativeName>
        <fullName evidence="1">RNA polymerase subunit beta'</fullName>
    </alternativeName>
    <alternativeName>
        <fullName evidence="1">Transcriptase subunit beta'</fullName>
    </alternativeName>
</protein>
<dbReference type="EC" id="2.7.7.6" evidence="1"/>
<dbReference type="EMBL" id="AE016830">
    <property type="protein sequence ID" value="AAO82905.1"/>
    <property type="molecule type" value="Genomic_DNA"/>
</dbReference>
<dbReference type="RefSeq" id="NP_816835.1">
    <property type="nucleotide sequence ID" value="NC_004668.1"/>
</dbReference>
<dbReference type="RefSeq" id="WP_002354777.1">
    <property type="nucleotide sequence ID" value="NZ_KE136524.1"/>
</dbReference>
<dbReference type="SMR" id="Q82Z41"/>
<dbReference type="STRING" id="226185.EF_3237"/>
<dbReference type="EnsemblBacteria" id="AAO82905">
    <property type="protein sequence ID" value="AAO82905"/>
    <property type="gene ID" value="EF_3237"/>
</dbReference>
<dbReference type="GeneID" id="60892472"/>
<dbReference type="KEGG" id="efa:EF3237"/>
<dbReference type="PATRIC" id="fig|226185.45.peg.344"/>
<dbReference type="eggNOG" id="COG0086">
    <property type="taxonomic scope" value="Bacteria"/>
</dbReference>
<dbReference type="HOGENOM" id="CLU_000524_3_1_9"/>
<dbReference type="Proteomes" id="UP000001415">
    <property type="component" value="Chromosome"/>
</dbReference>
<dbReference type="GO" id="GO:0000428">
    <property type="term" value="C:DNA-directed RNA polymerase complex"/>
    <property type="evidence" value="ECO:0007669"/>
    <property type="project" value="UniProtKB-KW"/>
</dbReference>
<dbReference type="GO" id="GO:0003677">
    <property type="term" value="F:DNA binding"/>
    <property type="evidence" value="ECO:0007669"/>
    <property type="project" value="UniProtKB-UniRule"/>
</dbReference>
<dbReference type="GO" id="GO:0003899">
    <property type="term" value="F:DNA-directed RNA polymerase activity"/>
    <property type="evidence" value="ECO:0007669"/>
    <property type="project" value="UniProtKB-UniRule"/>
</dbReference>
<dbReference type="GO" id="GO:0000287">
    <property type="term" value="F:magnesium ion binding"/>
    <property type="evidence" value="ECO:0007669"/>
    <property type="project" value="UniProtKB-UniRule"/>
</dbReference>
<dbReference type="GO" id="GO:0008270">
    <property type="term" value="F:zinc ion binding"/>
    <property type="evidence" value="ECO:0007669"/>
    <property type="project" value="UniProtKB-UniRule"/>
</dbReference>
<dbReference type="GO" id="GO:0006351">
    <property type="term" value="P:DNA-templated transcription"/>
    <property type="evidence" value="ECO:0007669"/>
    <property type="project" value="UniProtKB-UniRule"/>
</dbReference>
<dbReference type="CDD" id="cd02655">
    <property type="entry name" value="RNAP_beta'_C"/>
    <property type="match status" value="1"/>
</dbReference>
<dbReference type="CDD" id="cd01609">
    <property type="entry name" value="RNAP_beta'_N"/>
    <property type="match status" value="1"/>
</dbReference>
<dbReference type="FunFam" id="1.10.150.390:FF:000002">
    <property type="entry name" value="DNA-directed RNA polymerase subunit beta"/>
    <property type="match status" value="1"/>
</dbReference>
<dbReference type="FunFam" id="4.10.860.120:FF:000001">
    <property type="entry name" value="DNA-directed RNA polymerase subunit beta"/>
    <property type="match status" value="1"/>
</dbReference>
<dbReference type="Gene3D" id="1.10.132.30">
    <property type="match status" value="1"/>
</dbReference>
<dbReference type="Gene3D" id="1.10.150.390">
    <property type="match status" value="1"/>
</dbReference>
<dbReference type="Gene3D" id="1.10.1790.20">
    <property type="match status" value="1"/>
</dbReference>
<dbReference type="Gene3D" id="1.10.40.90">
    <property type="match status" value="1"/>
</dbReference>
<dbReference type="Gene3D" id="2.40.40.20">
    <property type="match status" value="1"/>
</dbReference>
<dbReference type="Gene3D" id="2.40.50.100">
    <property type="match status" value="1"/>
</dbReference>
<dbReference type="Gene3D" id="4.10.860.120">
    <property type="entry name" value="RNA polymerase II, clamp domain"/>
    <property type="match status" value="1"/>
</dbReference>
<dbReference type="Gene3D" id="1.10.274.100">
    <property type="entry name" value="RNA polymerase Rpb1, domain 3"/>
    <property type="match status" value="1"/>
</dbReference>
<dbReference type="HAMAP" id="MF_01322">
    <property type="entry name" value="RNApol_bact_RpoC"/>
    <property type="match status" value="1"/>
</dbReference>
<dbReference type="InterPro" id="IPR045867">
    <property type="entry name" value="DNA-dir_RpoC_beta_prime"/>
</dbReference>
<dbReference type="InterPro" id="IPR012754">
    <property type="entry name" value="DNA-dir_RpoC_beta_prime_bact"/>
</dbReference>
<dbReference type="InterPro" id="IPR000722">
    <property type="entry name" value="RNA_pol_asu"/>
</dbReference>
<dbReference type="InterPro" id="IPR006592">
    <property type="entry name" value="RNA_pol_N"/>
</dbReference>
<dbReference type="InterPro" id="IPR007080">
    <property type="entry name" value="RNA_pol_Rpb1_1"/>
</dbReference>
<dbReference type="InterPro" id="IPR007066">
    <property type="entry name" value="RNA_pol_Rpb1_3"/>
</dbReference>
<dbReference type="InterPro" id="IPR042102">
    <property type="entry name" value="RNA_pol_Rpb1_3_sf"/>
</dbReference>
<dbReference type="InterPro" id="IPR007083">
    <property type="entry name" value="RNA_pol_Rpb1_4"/>
</dbReference>
<dbReference type="InterPro" id="IPR007081">
    <property type="entry name" value="RNA_pol_Rpb1_5"/>
</dbReference>
<dbReference type="InterPro" id="IPR044893">
    <property type="entry name" value="RNA_pol_Rpb1_clamp_domain"/>
</dbReference>
<dbReference type="InterPro" id="IPR038120">
    <property type="entry name" value="Rpb1_funnel_sf"/>
</dbReference>
<dbReference type="NCBIfam" id="TIGR02386">
    <property type="entry name" value="rpoC_TIGR"/>
    <property type="match status" value="1"/>
</dbReference>
<dbReference type="PANTHER" id="PTHR19376">
    <property type="entry name" value="DNA-DIRECTED RNA POLYMERASE"/>
    <property type="match status" value="1"/>
</dbReference>
<dbReference type="PANTHER" id="PTHR19376:SF54">
    <property type="entry name" value="DNA-DIRECTED RNA POLYMERASE SUBUNIT BETA"/>
    <property type="match status" value="1"/>
</dbReference>
<dbReference type="Pfam" id="PF04997">
    <property type="entry name" value="RNA_pol_Rpb1_1"/>
    <property type="match status" value="1"/>
</dbReference>
<dbReference type="Pfam" id="PF00623">
    <property type="entry name" value="RNA_pol_Rpb1_2"/>
    <property type="match status" value="1"/>
</dbReference>
<dbReference type="Pfam" id="PF04983">
    <property type="entry name" value="RNA_pol_Rpb1_3"/>
    <property type="match status" value="1"/>
</dbReference>
<dbReference type="Pfam" id="PF05000">
    <property type="entry name" value="RNA_pol_Rpb1_4"/>
    <property type="match status" value="1"/>
</dbReference>
<dbReference type="Pfam" id="PF04998">
    <property type="entry name" value="RNA_pol_Rpb1_5"/>
    <property type="match status" value="1"/>
</dbReference>
<dbReference type="SMART" id="SM00663">
    <property type="entry name" value="RPOLA_N"/>
    <property type="match status" value="1"/>
</dbReference>
<dbReference type="SUPFAM" id="SSF64484">
    <property type="entry name" value="beta and beta-prime subunits of DNA dependent RNA-polymerase"/>
    <property type="match status" value="1"/>
</dbReference>
<name>RPOC_ENTFA</name>
<evidence type="ECO:0000255" key="1">
    <source>
        <dbReference type="HAMAP-Rule" id="MF_01322"/>
    </source>
</evidence>
<reference key="1">
    <citation type="journal article" date="2003" name="Science">
        <title>Role of mobile DNA in the evolution of vancomycin-resistant Enterococcus faecalis.</title>
        <authorList>
            <person name="Paulsen I.T."/>
            <person name="Banerjei L."/>
            <person name="Myers G.S.A."/>
            <person name="Nelson K.E."/>
            <person name="Seshadri R."/>
            <person name="Read T.D."/>
            <person name="Fouts D.E."/>
            <person name="Eisen J.A."/>
            <person name="Gill S.R."/>
            <person name="Heidelberg J.F."/>
            <person name="Tettelin H."/>
            <person name="Dodson R.J."/>
            <person name="Umayam L.A."/>
            <person name="Brinkac L.M."/>
            <person name="Beanan M.J."/>
            <person name="Daugherty S.C."/>
            <person name="DeBoy R.T."/>
            <person name="Durkin S.A."/>
            <person name="Kolonay J.F."/>
            <person name="Madupu R."/>
            <person name="Nelson W.C."/>
            <person name="Vamathevan J.J."/>
            <person name="Tran B."/>
            <person name="Upton J."/>
            <person name="Hansen T."/>
            <person name="Shetty J."/>
            <person name="Khouri H.M."/>
            <person name="Utterback T.R."/>
            <person name="Radune D."/>
            <person name="Ketchum K.A."/>
            <person name="Dougherty B.A."/>
            <person name="Fraser C.M."/>
        </authorList>
    </citation>
    <scope>NUCLEOTIDE SEQUENCE [LARGE SCALE GENOMIC DNA]</scope>
    <source>
        <strain>ATCC 700802 / V583</strain>
    </source>
</reference>
<keyword id="KW-0240">DNA-directed RNA polymerase</keyword>
<keyword id="KW-0460">Magnesium</keyword>
<keyword id="KW-0479">Metal-binding</keyword>
<keyword id="KW-0548">Nucleotidyltransferase</keyword>
<keyword id="KW-1185">Reference proteome</keyword>
<keyword id="KW-0804">Transcription</keyword>
<keyword id="KW-0808">Transferase</keyword>
<keyword id="KW-0862">Zinc</keyword>
<comment type="function">
    <text evidence="1">DNA-dependent RNA polymerase catalyzes the transcription of DNA into RNA using the four ribonucleoside triphosphates as substrates.</text>
</comment>
<comment type="catalytic activity">
    <reaction evidence="1">
        <text>RNA(n) + a ribonucleoside 5'-triphosphate = RNA(n+1) + diphosphate</text>
        <dbReference type="Rhea" id="RHEA:21248"/>
        <dbReference type="Rhea" id="RHEA-COMP:14527"/>
        <dbReference type="Rhea" id="RHEA-COMP:17342"/>
        <dbReference type="ChEBI" id="CHEBI:33019"/>
        <dbReference type="ChEBI" id="CHEBI:61557"/>
        <dbReference type="ChEBI" id="CHEBI:140395"/>
        <dbReference type="EC" id="2.7.7.6"/>
    </reaction>
</comment>
<comment type="cofactor">
    <cofactor evidence="1">
        <name>Mg(2+)</name>
        <dbReference type="ChEBI" id="CHEBI:18420"/>
    </cofactor>
    <text evidence="1">Binds 1 Mg(2+) ion per subunit.</text>
</comment>
<comment type="cofactor">
    <cofactor evidence="1">
        <name>Zn(2+)</name>
        <dbReference type="ChEBI" id="CHEBI:29105"/>
    </cofactor>
    <text evidence="1">Binds 2 Zn(2+) ions per subunit.</text>
</comment>
<comment type="subunit">
    <text evidence="1">The RNAP catalytic core consists of 2 alpha, 1 beta, 1 beta' and 1 omega subunit. When a sigma factor is associated with the core the holoenzyme is formed, which can initiate transcription.</text>
</comment>
<comment type="similarity">
    <text evidence="1">Belongs to the RNA polymerase beta' chain family.</text>
</comment>